<name>ALLR_ECOLI</name>
<organism>
    <name type="scientific">Escherichia coli (strain K12)</name>
    <dbReference type="NCBI Taxonomy" id="83333"/>
    <lineage>
        <taxon>Bacteria</taxon>
        <taxon>Pseudomonadati</taxon>
        <taxon>Pseudomonadota</taxon>
        <taxon>Gammaproteobacteria</taxon>
        <taxon>Enterobacterales</taxon>
        <taxon>Enterobacteriaceae</taxon>
        <taxon>Escherichia</taxon>
    </lineage>
</organism>
<dbReference type="EMBL" id="U89024">
    <property type="protein sequence ID" value="AAB93847.1"/>
    <property type="molecule type" value="Genomic_DNA"/>
</dbReference>
<dbReference type="EMBL" id="U82664">
    <property type="protein sequence ID" value="AAB40259.1"/>
    <property type="molecule type" value="Genomic_DNA"/>
</dbReference>
<dbReference type="EMBL" id="U00096">
    <property type="protein sequence ID" value="AAC73608.1"/>
    <property type="molecule type" value="Genomic_DNA"/>
</dbReference>
<dbReference type="EMBL" id="AP009048">
    <property type="protein sequence ID" value="BAE76284.1"/>
    <property type="molecule type" value="Genomic_DNA"/>
</dbReference>
<dbReference type="PIR" id="A64782">
    <property type="entry name" value="A64782"/>
</dbReference>
<dbReference type="RefSeq" id="NP_415039.1">
    <property type="nucleotide sequence ID" value="NC_000913.3"/>
</dbReference>
<dbReference type="RefSeq" id="WP_000141275.1">
    <property type="nucleotide sequence ID" value="NZ_STEB01000007.1"/>
</dbReference>
<dbReference type="PDB" id="1TF1">
    <property type="method" value="X-ray"/>
    <property type="resolution" value="1.80 A"/>
    <property type="chains" value="A/B/C/D=97-271"/>
</dbReference>
<dbReference type="PDBsum" id="1TF1"/>
<dbReference type="SMR" id="P0ACN4"/>
<dbReference type="BioGRID" id="4259871">
    <property type="interactions" value="121"/>
</dbReference>
<dbReference type="BioGRID" id="849709">
    <property type="interactions" value="2"/>
</dbReference>
<dbReference type="DIP" id="DIP-47907N"/>
<dbReference type="FunCoup" id="P0ACN4">
    <property type="interactions" value="87"/>
</dbReference>
<dbReference type="IntAct" id="P0ACN4">
    <property type="interactions" value="21"/>
</dbReference>
<dbReference type="STRING" id="511145.b0506"/>
<dbReference type="jPOST" id="P0ACN4"/>
<dbReference type="PaxDb" id="511145-b0506"/>
<dbReference type="EnsemblBacteria" id="AAC73608">
    <property type="protein sequence ID" value="AAC73608"/>
    <property type="gene ID" value="b0506"/>
</dbReference>
<dbReference type="GeneID" id="86945421"/>
<dbReference type="GeneID" id="945333"/>
<dbReference type="KEGG" id="ecj:JW0494"/>
<dbReference type="KEGG" id="eco:b0506"/>
<dbReference type="KEGG" id="ecoc:C3026_02485"/>
<dbReference type="PATRIC" id="fig|1411691.4.peg.1771"/>
<dbReference type="EchoBASE" id="EB3382"/>
<dbReference type="eggNOG" id="COG1414">
    <property type="taxonomic scope" value="Bacteria"/>
</dbReference>
<dbReference type="HOGENOM" id="CLU_062618_7_1_6"/>
<dbReference type="InParanoid" id="P0ACN4"/>
<dbReference type="OMA" id="EHMDGLR"/>
<dbReference type="OrthoDB" id="9807558at2"/>
<dbReference type="PhylomeDB" id="P0ACN4"/>
<dbReference type="BioCyc" id="EcoCyc:G6276-MONOMER"/>
<dbReference type="EvolutionaryTrace" id="P0ACN4"/>
<dbReference type="PRO" id="PR:P0ACN4"/>
<dbReference type="Proteomes" id="UP000000625">
    <property type="component" value="Chromosome"/>
</dbReference>
<dbReference type="GO" id="GO:0005829">
    <property type="term" value="C:cytosol"/>
    <property type="evidence" value="ECO:0000314"/>
    <property type="project" value="EcoCyc"/>
</dbReference>
<dbReference type="GO" id="GO:0003677">
    <property type="term" value="F:DNA binding"/>
    <property type="evidence" value="ECO:0000318"/>
    <property type="project" value="GO_Central"/>
</dbReference>
<dbReference type="GO" id="GO:0003700">
    <property type="term" value="F:DNA-binding transcription factor activity"/>
    <property type="evidence" value="ECO:0000314"/>
    <property type="project" value="EcoCyc"/>
</dbReference>
<dbReference type="GO" id="GO:0042802">
    <property type="term" value="F:identical protein binding"/>
    <property type="evidence" value="ECO:0000353"/>
    <property type="project" value="IntAct"/>
</dbReference>
<dbReference type="GO" id="GO:0006974">
    <property type="term" value="P:DNA damage response"/>
    <property type="evidence" value="ECO:0000270"/>
    <property type="project" value="EcoliWiki"/>
</dbReference>
<dbReference type="GO" id="GO:0045892">
    <property type="term" value="P:negative regulation of DNA-templated transcription"/>
    <property type="evidence" value="ECO:0000314"/>
    <property type="project" value="EcoCyc"/>
</dbReference>
<dbReference type="FunFam" id="1.10.10.10:FF:000198">
    <property type="entry name" value="HTH-type transcriptional repressor AllR"/>
    <property type="match status" value="1"/>
</dbReference>
<dbReference type="FunFam" id="3.30.450.40:FF:000017">
    <property type="entry name" value="HTH-type transcriptional repressor AllR"/>
    <property type="match status" value="1"/>
</dbReference>
<dbReference type="Gene3D" id="3.30.450.40">
    <property type="match status" value="1"/>
</dbReference>
<dbReference type="Gene3D" id="1.10.10.10">
    <property type="entry name" value="Winged helix-like DNA-binding domain superfamily/Winged helix DNA-binding domain"/>
    <property type="match status" value="1"/>
</dbReference>
<dbReference type="InterPro" id="IPR029016">
    <property type="entry name" value="GAF-like_dom_sf"/>
</dbReference>
<dbReference type="InterPro" id="IPR050707">
    <property type="entry name" value="HTH_MetabolicPath_Reg"/>
</dbReference>
<dbReference type="InterPro" id="IPR014757">
    <property type="entry name" value="Tscrpt_reg_IclR_C"/>
</dbReference>
<dbReference type="InterPro" id="IPR005471">
    <property type="entry name" value="Tscrpt_reg_IclR_N"/>
</dbReference>
<dbReference type="InterPro" id="IPR036388">
    <property type="entry name" value="WH-like_DNA-bd_sf"/>
</dbReference>
<dbReference type="InterPro" id="IPR036390">
    <property type="entry name" value="WH_DNA-bd_sf"/>
</dbReference>
<dbReference type="NCBIfam" id="NF007548">
    <property type="entry name" value="PRK10163.1"/>
    <property type="match status" value="1"/>
</dbReference>
<dbReference type="PANTHER" id="PTHR30136">
    <property type="entry name" value="HELIX-TURN-HELIX TRANSCRIPTIONAL REGULATOR, ICLR FAMILY"/>
    <property type="match status" value="1"/>
</dbReference>
<dbReference type="PANTHER" id="PTHR30136:SF24">
    <property type="entry name" value="HTH-TYPE TRANSCRIPTIONAL REPRESSOR ALLR"/>
    <property type="match status" value="1"/>
</dbReference>
<dbReference type="Pfam" id="PF09339">
    <property type="entry name" value="HTH_IclR"/>
    <property type="match status" value="1"/>
</dbReference>
<dbReference type="Pfam" id="PF01614">
    <property type="entry name" value="IclR_C"/>
    <property type="match status" value="1"/>
</dbReference>
<dbReference type="SMART" id="SM00346">
    <property type="entry name" value="HTH_ICLR"/>
    <property type="match status" value="1"/>
</dbReference>
<dbReference type="SUPFAM" id="SSF55781">
    <property type="entry name" value="GAF domain-like"/>
    <property type="match status" value="1"/>
</dbReference>
<dbReference type="SUPFAM" id="SSF46785">
    <property type="entry name" value="Winged helix' DNA-binding domain"/>
    <property type="match status" value="1"/>
</dbReference>
<dbReference type="PROSITE" id="PS51077">
    <property type="entry name" value="HTH_ICLR"/>
    <property type="match status" value="1"/>
</dbReference>
<dbReference type="PROSITE" id="PS51078">
    <property type="entry name" value="ICLR_ED"/>
    <property type="match status" value="1"/>
</dbReference>
<comment type="function">
    <text evidence="3 4 5">Negative regulator of allantoin and glyoxylate utilization operons. Binds to the gcl promoter and to the allS-allA intergenic region. Binding to DNA is abolished by glyoxylate.</text>
</comment>
<comment type="subunit">
    <text evidence="5">Homotetramer and homodimer. Homotetramer in its active, DNA-bound form. Homodimer in its inactive form.</text>
</comment>
<comment type="interaction">
    <interactant intactId="EBI-561736">
        <id>P0ACN4</id>
    </interactant>
    <interactant intactId="EBI-561736">
        <id>P0ACN4</id>
        <label>allR</label>
    </interactant>
    <organismsDiffer>false</organismsDiffer>
    <experiments>4</experiments>
</comment>
<comment type="interaction">
    <interactant intactId="EBI-561736">
        <id>P0ACN4</id>
    </interactant>
    <interactant intactId="EBI-1112975">
        <id>P31552</id>
        <label>caiC</label>
    </interactant>
    <organismsDiffer>false</organismsDiffer>
    <experiments>3</experiments>
</comment>
<gene>
    <name type="primary">allR</name>
    <name type="synonym">glxA3</name>
    <name type="synonym">ybbU</name>
    <name type="ordered locus">b0506</name>
    <name type="ordered locus">JW0494</name>
</gene>
<proteinExistence type="evidence at protein level"/>
<protein>
    <recommendedName>
        <fullName>HTH-type transcriptional repressor AllR</fullName>
    </recommendedName>
    <alternativeName>
        <fullName>Negative regulator of allantoin and glyoxylate utilization operons</fullName>
    </alternativeName>
</protein>
<feature type="chain" id="PRO_0000201753" description="HTH-type transcriptional repressor AllR">
    <location>
        <begin position="1"/>
        <end position="271"/>
    </location>
</feature>
<feature type="domain" description="HTH iclR-type" evidence="1">
    <location>
        <begin position="21"/>
        <end position="83"/>
    </location>
</feature>
<feature type="domain" description="IclR-ED" evidence="2">
    <location>
        <begin position="98"/>
        <end position="267"/>
    </location>
</feature>
<feature type="DNA-binding region" description="H-T-H motif" evidence="1">
    <location>
        <begin position="43"/>
        <end position="62"/>
    </location>
</feature>
<feature type="binding site">
    <location>
        <begin position="154"/>
        <end position="156"/>
    </location>
    <ligand>
        <name>glyoxylate</name>
        <dbReference type="ChEBI" id="CHEBI:36655"/>
    </ligand>
</feature>
<feature type="binding site">
    <location>
        <position position="207"/>
    </location>
    <ligand>
        <name>glyoxylate</name>
        <dbReference type="ChEBI" id="CHEBI:36655"/>
    </ligand>
</feature>
<feature type="binding site">
    <location>
        <position position="217"/>
    </location>
    <ligand>
        <name>glyoxylate</name>
        <dbReference type="ChEBI" id="CHEBI:36655"/>
    </ligand>
</feature>
<feature type="binding site">
    <location>
        <begin position="234"/>
        <end position="236"/>
    </location>
    <ligand>
        <name>glyoxylate</name>
        <dbReference type="ChEBI" id="CHEBI:36655"/>
    </ligand>
</feature>
<feature type="mutagenesis site" description="Loss of repressor activity. Loss of DNA binding. Reduces assembly into functionally active tetramers." evidence="5">
    <original>CKSMVRMC</original>
    <variation>APA</variation>
    <location>
        <begin position="135"/>
        <end position="142"/>
    </location>
</feature>
<feature type="mutagenesis site" description="No effect on repressor activity. Loss of glyoxylate-triggered dissociation from DNA." evidence="5">
    <original>M</original>
    <variation>A</variation>
    <location>
        <position position="141"/>
    </location>
</feature>
<feature type="mutagenesis site" description="Strongly reduced repressor activity. Reduces DNA binding. Prevents assembly into functionally active tetramers." evidence="5">
    <original>C</original>
    <variation>W</variation>
    <location>
        <position position="142"/>
    </location>
</feature>
<feature type="mutagenesis site" description="Reduced repressor activity. Loss of glyoxylate-triggered dissociation from DNA." evidence="5">
    <original>L</original>
    <variation>A</variation>
    <location>
        <position position="215"/>
    </location>
</feature>
<feature type="mutagenesis site" description="Slightly reduced repressor activity. Loss of glyoxylate-triggered dissociation from DNA." evidence="5">
    <original>C</original>
    <variation>A</variation>
    <variation>S</variation>
    <location>
        <position position="217"/>
    </location>
</feature>
<feature type="mutagenesis site" description="Reduced repressor activity. Loss of glyoxylate-triggered dissociation from DNA." evidence="5">
    <original>S</original>
    <variation>A</variation>
    <variation>N</variation>
    <location>
        <position position="234"/>
    </location>
</feature>
<feature type="mutagenesis site" description="Slightly reduced repressor activity. Loss of glyoxylate-triggered dissociation from DNA." evidence="5">
    <original>S</original>
    <variation>A</variation>
    <variation>M</variation>
    <location>
        <position position="236"/>
    </location>
</feature>
<feature type="helix" evidence="6">
    <location>
        <begin position="97"/>
        <end position="113"/>
    </location>
</feature>
<feature type="strand" evidence="6">
    <location>
        <begin position="115"/>
        <end position="123"/>
    </location>
</feature>
<feature type="strand" evidence="6">
    <location>
        <begin position="126"/>
        <end position="133"/>
    </location>
</feature>
<feature type="strand" evidence="6">
    <location>
        <begin position="138"/>
        <end position="141"/>
    </location>
</feature>
<feature type="strand" evidence="6">
    <location>
        <begin position="148"/>
        <end position="150"/>
    </location>
</feature>
<feature type="turn" evidence="6">
    <location>
        <begin position="151"/>
        <end position="153"/>
    </location>
</feature>
<feature type="helix" evidence="6">
    <location>
        <begin position="155"/>
        <end position="161"/>
    </location>
</feature>
<feature type="helix" evidence="6">
    <location>
        <begin position="166"/>
        <end position="176"/>
    </location>
</feature>
<feature type="helix" evidence="6">
    <location>
        <begin position="189"/>
        <end position="202"/>
    </location>
</feature>
<feature type="strand" evidence="6">
    <location>
        <begin position="205"/>
        <end position="212"/>
    </location>
</feature>
<feature type="strand" evidence="6">
    <location>
        <begin position="215"/>
        <end position="223"/>
    </location>
</feature>
<feature type="strand" evidence="6">
    <location>
        <begin position="229"/>
        <end position="238"/>
    </location>
</feature>
<feature type="turn" evidence="6">
    <location>
        <begin position="239"/>
        <end position="241"/>
    </location>
</feature>
<feature type="helix" evidence="6">
    <location>
        <begin position="244"/>
        <end position="246"/>
    </location>
</feature>
<feature type="helix" evidence="6">
    <location>
        <begin position="247"/>
        <end position="265"/>
    </location>
</feature>
<sequence>MTEVRRRGRPGQAEPVAQKGAQALERGIAILQYLEKSGGSSSVSDISLNLDLPLSTTFRLLKVLQAADFVYQDSQLGWWHIGLGVFNVGAAYIHNRDVLSVAGPFMRRLMLLSGETVNVAIRNGNEAVLIGQLECKSMVRMCAPLGSRLPLHASGAGKALLYPLAEEELMSIILQTGLQQFTPTTLVDMPTLLKDLEQARELGYTVDKEEHVVGLNCIASAIYDDVGSVVAAISISGPSSRLTEDRFVSQGELVRDTARDISTALGLKAHP</sequence>
<keyword id="KW-0002">3D-structure</keyword>
<keyword id="KW-0238">DNA-binding</keyword>
<keyword id="KW-1185">Reference proteome</keyword>
<keyword id="KW-0678">Repressor</keyword>
<keyword id="KW-0804">Transcription</keyword>
<keyword id="KW-0805">Transcription regulation</keyword>
<reference key="1">
    <citation type="journal article" date="1999" name="J. Bacteriol.">
        <title>Genetic analysis of a chromosomal region containing genes required for assimilation of allantoin nitrogen and linked glyoxylate metabolism in Escherichia coli.</title>
        <authorList>
            <person name="Cusa E."/>
            <person name="Obradors N."/>
            <person name="Baldoma L."/>
            <person name="Badia J."/>
            <person name="Aguilar J."/>
        </authorList>
    </citation>
    <scope>NUCLEOTIDE SEQUENCE [GENOMIC DNA]</scope>
    <scope>FUNCTION</scope>
    <source>
        <strain>K12 / ECL1</strain>
    </source>
</reference>
<reference key="2">
    <citation type="submission" date="1997-01" db="EMBL/GenBank/DDBJ databases">
        <title>Sequence of minutes 4-25 of Escherichia coli.</title>
        <authorList>
            <person name="Chung E."/>
            <person name="Allen E."/>
            <person name="Araujo R."/>
            <person name="Aparicio A.M."/>
            <person name="Davis K."/>
            <person name="Duncan M."/>
            <person name="Federspiel N."/>
            <person name="Hyman R."/>
            <person name="Kalman S."/>
            <person name="Komp C."/>
            <person name="Kurdi O."/>
            <person name="Lew H."/>
            <person name="Lin D."/>
            <person name="Namath A."/>
            <person name="Oefner P."/>
            <person name="Roberts D."/>
            <person name="Schramm S."/>
            <person name="Davis R.W."/>
        </authorList>
    </citation>
    <scope>NUCLEOTIDE SEQUENCE [LARGE SCALE GENOMIC DNA]</scope>
    <source>
        <strain>K12 / MG1655 / ATCC 47076</strain>
    </source>
</reference>
<reference key="3">
    <citation type="journal article" date="1997" name="Science">
        <title>The complete genome sequence of Escherichia coli K-12.</title>
        <authorList>
            <person name="Blattner F.R."/>
            <person name="Plunkett G. III"/>
            <person name="Bloch C.A."/>
            <person name="Perna N.T."/>
            <person name="Burland V."/>
            <person name="Riley M."/>
            <person name="Collado-Vides J."/>
            <person name="Glasner J.D."/>
            <person name="Rode C.K."/>
            <person name="Mayhew G.F."/>
            <person name="Gregor J."/>
            <person name="Davis N.W."/>
            <person name="Kirkpatrick H.A."/>
            <person name="Goeden M.A."/>
            <person name="Rose D.J."/>
            <person name="Mau B."/>
            <person name="Shao Y."/>
        </authorList>
    </citation>
    <scope>NUCLEOTIDE SEQUENCE [LARGE SCALE GENOMIC DNA]</scope>
    <source>
        <strain>K12 / MG1655 / ATCC 47076</strain>
    </source>
</reference>
<reference key="4">
    <citation type="journal article" date="2006" name="Mol. Syst. Biol.">
        <title>Highly accurate genome sequences of Escherichia coli K-12 strains MG1655 and W3110.</title>
        <authorList>
            <person name="Hayashi K."/>
            <person name="Morooka N."/>
            <person name="Yamamoto Y."/>
            <person name="Fujita K."/>
            <person name="Isono K."/>
            <person name="Choi S."/>
            <person name="Ohtsubo E."/>
            <person name="Baba T."/>
            <person name="Wanner B.L."/>
            <person name="Mori H."/>
            <person name="Horiuchi T."/>
        </authorList>
    </citation>
    <scope>NUCLEOTIDE SEQUENCE [LARGE SCALE GENOMIC DNA]</scope>
    <source>
        <strain>K12 / W3110 / ATCC 27325 / DSM 5911</strain>
    </source>
</reference>
<reference key="5">
    <citation type="journal article" date="2002" name="J. Mol. Biol.">
        <title>Regulation of the Escherichia coli allantoin regulon: coordinated function of the repressor AllR and the activator AllS.</title>
        <authorList>
            <person name="Rintoul M.R."/>
            <person name="Cusa E."/>
            <person name="Baldoma L."/>
            <person name="Badia J."/>
            <person name="Reitzer L."/>
            <person name="Aguilar J."/>
        </authorList>
    </citation>
    <scope>FUNCTION</scope>
    <scope>DNA-BINDING</scope>
    <source>
        <strain>K12</strain>
    </source>
</reference>
<reference key="6">
    <citation type="journal article" date="2006" name="J. Mol. Biol.">
        <title>Structural and biochemical study of effector molecule recognition by the E.coli glyoxylate and allantoin utilization regulatory protein AllR.</title>
        <authorList>
            <person name="Walker J.R."/>
            <person name="Altamentova S."/>
            <person name="Ezersky A."/>
            <person name="Lorca G."/>
            <person name="Skarina T."/>
            <person name="Kudritska M."/>
            <person name="Ball L.J."/>
            <person name="Bochkarev A."/>
            <person name="Savchenko A."/>
        </authorList>
    </citation>
    <scope>X-RAY CRYSTALLOGRAPHY (1.8 ANGSTROMS) OF 97-271 IN COMPLEX WITH GLYOXALATE</scope>
    <scope>FUNCTION</scope>
    <scope>SUBUNIT</scope>
    <scope>MUTAGENESIS OF 135-CYS--CYS-142; MET-141; CYS-142; LEU-215; CYS-217; SER-234 AND SER-236</scope>
    <source>
        <strain>K12 / BW25113</strain>
    </source>
</reference>
<evidence type="ECO:0000255" key="1">
    <source>
        <dbReference type="PROSITE-ProRule" id="PRU00393"/>
    </source>
</evidence>
<evidence type="ECO:0000255" key="2">
    <source>
        <dbReference type="PROSITE-ProRule" id="PRU00394"/>
    </source>
</evidence>
<evidence type="ECO:0000269" key="3">
    <source>
    </source>
</evidence>
<evidence type="ECO:0000269" key="4">
    <source>
    </source>
</evidence>
<evidence type="ECO:0000269" key="5">
    <source>
    </source>
</evidence>
<evidence type="ECO:0007829" key="6">
    <source>
        <dbReference type="PDB" id="1TF1"/>
    </source>
</evidence>
<accession>P0ACN4</accession>
<accession>P77734</accession>
<accession>Q2MBS2</accession>